<proteinExistence type="inferred from homology"/>
<evidence type="ECO:0000255" key="1">
    <source>
        <dbReference type="HAMAP-Rule" id="MF_01331"/>
    </source>
</evidence>
<evidence type="ECO:0000305" key="2"/>
<accession>A5F544</accession>
<accession>C3LXJ0</accession>
<name>RL22_VIBC3</name>
<reference key="1">
    <citation type="submission" date="2007-03" db="EMBL/GenBank/DDBJ databases">
        <authorList>
            <person name="Heidelberg J."/>
        </authorList>
    </citation>
    <scope>NUCLEOTIDE SEQUENCE [LARGE SCALE GENOMIC DNA]</scope>
    <source>
        <strain>ATCC 39541 / Classical Ogawa 395 / O395</strain>
    </source>
</reference>
<reference key="2">
    <citation type="journal article" date="2008" name="PLoS ONE">
        <title>A recalibrated molecular clock and independent origins for the cholera pandemic clones.</title>
        <authorList>
            <person name="Feng L."/>
            <person name="Reeves P.R."/>
            <person name="Lan R."/>
            <person name="Ren Y."/>
            <person name="Gao C."/>
            <person name="Zhou Z."/>
            <person name="Ren Y."/>
            <person name="Cheng J."/>
            <person name="Wang W."/>
            <person name="Wang J."/>
            <person name="Qian W."/>
            <person name="Li D."/>
            <person name="Wang L."/>
        </authorList>
    </citation>
    <scope>NUCLEOTIDE SEQUENCE [LARGE SCALE GENOMIC DNA]</scope>
    <source>
        <strain>ATCC 39541 / Classical Ogawa 395 / O395</strain>
    </source>
</reference>
<feature type="chain" id="PRO_0000354534" description="Large ribosomal subunit protein uL22">
    <location>
        <begin position="1"/>
        <end position="110"/>
    </location>
</feature>
<keyword id="KW-0687">Ribonucleoprotein</keyword>
<keyword id="KW-0689">Ribosomal protein</keyword>
<keyword id="KW-0694">RNA-binding</keyword>
<keyword id="KW-0699">rRNA-binding</keyword>
<gene>
    <name evidence="1" type="primary">rplV</name>
    <name type="ordered locus">VC0395_A2169</name>
    <name type="ordered locus">VC395_2704</name>
</gene>
<sequence length="110" mass="12198">MEAIAKHNFARISPQKARLVADQIRGKSVDQALELLTFSNKKAAELVKKVLESAIANAEHNEGADIDDLRVAKIFVDEGPVMKRIMPRAKGRADRILKRSSHITVVVADR</sequence>
<dbReference type="EMBL" id="CP000627">
    <property type="protein sequence ID" value="ABQ21683.1"/>
    <property type="molecule type" value="Genomic_DNA"/>
</dbReference>
<dbReference type="EMBL" id="CP001235">
    <property type="protein sequence ID" value="ACP10690.1"/>
    <property type="molecule type" value="Genomic_DNA"/>
</dbReference>
<dbReference type="RefSeq" id="WP_000387269.1">
    <property type="nucleotide sequence ID" value="NZ_JAACZH010000007.1"/>
</dbReference>
<dbReference type="SMR" id="A5F544"/>
<dbReference type="GeneID" id="94012757"/>
<dbReference type="KEGG" id="vco:VC0395_A2169"/>
<dbReference type="KEGG" id="vcr:VC395_2704"/>
<dbReference type="PATRIC" id="fig|345073.21.peg.2604"/>
<dbReference type="eggNOG" id="COG0091">
    <property type="taxonomic scope" value="Bacteria"/>
</dbReference>
<dbReference type="HOGENOM" id="CLU_083987_3_3_6"/>
<dbReference type="OrthoDB" id="9805969at2"/>
<dbReference type="Proteomes" id="UP000000249">
    <property type="component" value="Chromosome 2"/>
</dbReference>
<dbReference type="GO" id="GO:0022625">
    <property type="term" value="C:cytosolic large ribosomal subunit"/>
    <property type="evidence" value="ECO:0007669"/>
    <property type="project" value="TreeGrafter"/>
</dbReference>
<dbReference type="GO" id="GO:0019843">
    <property type="term" value="F:rRNA binding"/>
    <property type="evidence" value="ECO:0007669"/>
    <property type="project" value="UniProtKB-UniRule"/>
</dbReference>
<dbReference type="GO" id="GO:0003735">
    <property type="term" value="F:structural constituent of ribosome"/>
    <property type="evidence" value="ECO:0007669"/>
    <property type="project" value="InterPro"/>
</dbReference>
<dbReference type="GO" id="GO:0006412">
    <property type="term" value="P:translation"/>
    <property type="evidence" value="ECO:0007669"/>
    <property type="project" value="UniProtKB-UniRule"/>
</dbReference>
<dbReference type="CDD" id="cd00336">
    <property type="entry name" value="Ribosomal_L22"/>
    <property type="match status" value="1"/>
</dbReference>
<dbReference type="FunFam" id="3.90.470.10:FF:000001">
    <property type="entry name" value="50S ribosomal protein L22"/>
    <property type="match status" value="1"/>
</dbReference>
<dbReference type="Gene3D" id="3.90.470.10">
    <property type="entry name" value="Ribosomal protein L22/L17"/>
    <property type="match status" value="1"/>
</dbReference>
<dbReference type="HAMAP" id="MF_01331_B">
    <property type="entry name" value="Ribosomal_uL22_B"/>
    <property type="match status" value="1"/>
</dbReference>
<dbReference type="InterPro" id="IPR001063">
    <property type="entry name" value="Ribosomal_uL22"/>
</dbReference>
<dbReference type="InterPro" id="IPR005727">
    <property type="entry name" value="Ribosomal_uL22_bac/chlpt-type"/>
</dbReference>
<dbReference type="InterPro" id="IPR047867">
    <property type="entry name" value="Ribosomal_uL22_bac/org-type"/>
</dbReference>
<dbReference type="InterPro" id="IPR018260">
    <property type="entry name" value="Ribosomal_uL22_CS"/>
</dbReference>
<dbReference type="InterPro" id="IPR036394">
    <property type="entry name" value="Ribosomal_uL22_sf"/>
</dbReference>
<dbReference type="NCBIfam" id="TIGR01044">
    <property type="entry name" value="rplV_bact"/>
    <property type="match status" value="1"/>
</dbReference>
<dbReference type="PANTHER" id="PTHR13501">
    <property type="entry name" value="CHLOROPLAST 50S RIBOSOMAL PROTEIN L22-RELATED"/>
    <property type="match status" value="1"/>
</dbReference>
<dbReference type="PANTHER" id="PTHR13501:SF8">
    <property type="entry name" value="LARGE RIBOSOMAL SUBUNIT PROTEIN UL22M"/>
    <property type="match status" value="1"/>
</dbReference>
<dbReference type="Pfam" id="PF00237">
    <property type="entry name" value="Ribosomal_L22"/>
    <property type="match status" value="1"/>
</dbReference>
<dbReference type="SUPFAM" id="SSF54843">
    <property type="entry name" value="Ribosomal protein L22"/>
    <property type="match status" value="1"/>
</dbReference>
<dbReference type="PROSITE" id="PS00464">
    <property type="entry name" value="RIBOSOMAL_L22"/>
    <property type="match status" value="1"/>
</dbReference>
<comment type="function">
    <text evidence="1">This protein binds specifically to 23S rRNA; its binding is stimulated by other ribosomal proteins, e.g. L4, L17, and L20. It is important during the early stages of 50S assembly. It makes multiple contacts with different domains of the 23S rRNA in the assembled 50S subunit and ribosome (By similarity).</text>
</comment>
<comment type="function">
    <text evidence="1">The globular domain of the protein is located near the polypeptide exit tunnel on the outside of the subunit, while an extended beta-hairpin is found that lines the wall of the exit tunnel in the center of the 70S ribosome.</text>
</comment>
<comment type="subunit">
    <text evidence="1">Part of the 50S ribosomal subunit.</text>
</comment>
<comment type="similarity">
    <text evidence="1">Belongs to the universal ribosomal protein uL22 family.</text>
</comment>
<protein>
    <recommendedName>
        <fullName evidence="1">Large ribosomal subunit protein uL22</fullName>
    </recommendedName>
    <alternativeName>
        <fullName evidence="2">50S ribosomal protein L22</fullName>
    </alternativeName>
</protein>
<organism>
    <name type="scientific">Vibrio cholerae serotype O1 (strain ATCC 39541 / Classical Ogawa 395 / O395)</name>
    <dbReference type="NCBI Taxonomy" id="345073"/>
    <lineage>
        <taxon>Bacteria</taxon>
        <taxon>Pseudomonadati</taxon>
        <taxon>Pseudomonadota</taxon>
        <taxon>Gammaproteobacteria</taxon>
        <taxon>Vibrionales</taxon>
        <taxon>Vibrionaceae</taxon>
        <taxon>Vibrio</taxon>
    </lineage>
</organism>